<organismHost>
    <name type="scientific">Equus caballus</name>
    <name type="common">Horse</name>
    <dbReference type="NCBI Taxonomy" id="9796"/>
</organismHost>
<dbReference type="EMBL" id="AF144803">
    <property type="protein sequence ID" value="AAD50678.1"/>
    <property type="molecule type" value="Genomic_RNA"/>
</dbReference>
<dbReference type="GO" id="GO:0005576">
    <property type="term" value="C:extracellular region"/>
    <property type="evidence" value="ECO:0007669"/>
    <property type="project" value="UniProtKB-SubCell"/>
</dbReference>
<dbReference type="GO" id="GO:0044155">
    <property type="term" value="C:host caveola"/>
    <property type="evidence" value="ECO:0007669"/>
    <property type="project" value="UniProtKB-SubCell"/>
</dbReference>
<dbReference type="GO" id="GO:0044169">
    <property type="term" value="C:host cell rough endoplasmic reticulum membrane"/>
    <property type="evidence" value="ECO:0007669"/>
    <property type="project" value="UniProtKB-SubCell"/>
</dbReference>
<dbReference type="GO" id="GO:0016020">
    <property type="term" value="C:membrane"/>
    <property type="evidence" value="ECO:0007669"/>
    <property type="project" value="UniProtKB-UniRule"/>
</dbReference>
<dbReference type="GO" id="GO:0015267">
    <property type="term" value="F:channel activity"/>
    <property type="evidence" value="ECO:0007669"/>
    <property type="project" value="UniProtKB-KW"/>
</dbReference>
<dbReference type="GO" id="GO:0046872">
    <property type="term" value="F:metal ion binding"/>
    <property type="evidence" value="ECO:0007669"/>
    <property type="project" value="UniProtKB-UniRule"/>
</dbReference>
<dbReference type="GO" id="GO:0090729">
    <property type="term" value="F:toxin activity"/>
    <property type="evidence" value="ECO:0007669"/>
    <property type="project" value="UniProtKB-UniRule"/>
</dbReference>
<dbReference type="GO" id="GO:0034220">
    <property type="term" value="P:monoatomic ion transmembrane transport"/>
    <property type="evidence" value="ECO:0007669"/>
    <property type="project" value="UniProtKB-KW"/>
</dbReference>
<dbReference type="GO" id="GO:0039520">
    <property type="term" value="P:symbiont-mediated activation of host autophagy"/>
    <property type="evidence" value="ECO:0007669"/>
    <property type="project" value="UniProtKB-KW"/>
</dbReference>
<dbReference type="GO" id="GO:0016032">
    <property type="term" value="P:viral process"/>
    <property type="evidence" value="ECO:0007669"/>
    <property type="project" value="UniProtKB-UniRule"/>
</dbReference>
<dbReference type="Gene3D" id="1.20.5.430">
    <property type="match status" value="1"/>
</dbReference>
<dbReference type="HAMAP" id="MF_04091">
    <property type="entry name" value="ROTA_NSP4"/>
    <property type="match status" value="1"/>
</dbReference>
<dbReference type="InterPro" id="IPR002107">
    <property type="entry name" value="Rotavirus_NSP4"/>
</dbReference>
<dbReference type="Pfam" id="PF01452">
    <property type="entry name" value="Rota_NSP4"/>
    <property type="match status" value="1"/>
</dbReference>
<dbReference type="SUPFAM" id="SSF58030">
    <property type="entry name" value="Rotavirus nonstructural proteins"/>
    <property type="match status" value="1"/>
</dbReference>
<reference key="1">
    <citation type="journal article" date="2000" name="Arch. Virol.">
        <title>Species specificity and interspecies relatedness of NSP4 genetic groups by comparative NSP4 sequence analyses of animal rotaviruses.</title>
        <authorList>
            <person name="Ciarlet M."/>
            <person name="Liprandi F."/>
            <person name="Conner M.E."/>
            <person name="Estes M.K."/>
        </authorList>
    </citation>
    <scope>NUCLEOTIDE SEQUENCE [GENOMIC RNA]</scope>
</reference>
<proteinExistence type="inferred from homology"/>
<protein>
    <recommendedName>
        <fullName evidence="1">Non-structural glycoprotein 4</fullName>
        <shortName evidence="1">NSP4</shortName>
    </recommendedName>
    <alternativeName>
        <fullName evidence="1">NCVP5</fullName>
    </alternativeName>
    <alternativeName>
        <fullName evidence="1">NS28</fullName>
    </alternativeName>
</protein>
<accession>Q9PYD0</accession>
<comment type="function">
    <text evidence="1">Plays an essential role in the virus replication cycle by acting as a viroporin. Creates a pore in the host endoplasmic reticulum and as a consequence releases Ca(2+) in the cytoplasm of infected cell. In turn, high levels of cytoplasmic calcium trigger membrane trafficking and transport of viral ER-associated proteins to viroplasms, sites of viral genome replication and immature particle assembly.</text>
</comment>
<comment type="function">
    <text evidence="1">The secreted form acts as an enterotoxin that causes phospholipase C-dependent elevation of the intracellular calcium concentration in host intestinal mucosa cells. Increased concentration of intracellular calcium disrupts the cytoskeleton and the tight junctions, raising the paracellular permeability. Potentiates chloride ion secretion through a calcium ion-dependent signaling pathway, inducing age-dependent diarrhea. To perform this enterotoxigenic role in vivo, NSP4 is released from infected enterocytes in a soluble form capable of diffusing within the intestinal lumen and interacting with host plasma membrane receptors on neighboring epithelial cells such as integrins ITGA1/ITGB1 and ITGA2/ITGB1.</text>
</comment>
<comment type="subunit">
    <text evidence="1">Homotetramer. Interacts with the immature particle in the viroplasm. Interacts with host CAV1, early and late in infection. Interacts with host integrin ITGA1/ITGB1 heterodimer. Interacts with host integrin ITGA2/ITGB1 heterodimer. Interaction with microtubules blocks trafficking to the Golgi apparatus.</text>
</comment>
<comment type="subcellular location">
    <subcellularLocation>
        <location evidence="1">Host rough endoplasmic reticulum membrane</location>
        <topology evidence="1">Single-pass type III membrane protein</topology>
    </subcellularLocation>
    <subcellularLocation>
        <location evidence="1">Host membrane</location>
        <location evidence="1">Host caveola</location>
        <topology evidence="1">Single-pass type III membrane protein</topology>
    </subcellularLocation>
    <subcellularLocation>
        <location evidence="1">Secreted</location>
    </subcellularLocation>
    <text evidence="1">NSP4 also localizes in vesicular structures which contain autophagosomal markers and associate with viroplasms in virus-infected cells. Additionally, a soluble form of glycosylated NSP4 is secreted despite retention of its transmembrane domain.</text>
</comment>
<comment type="domain">
    <text evidence="1">Binds 1 calcium ion per tetramer.</text>
</comment>
<comment type="PTM">
    <text evidence="1">The N-glycosyl content is primarily Man(9)GlcNAc, with a small amount of Man(8)GlcNAc.</text>
</comment>
<comment type="similarity">
    <text evidence="1">Belongs to the rotavirus NSP4 family.</text>
</comment>
<evidence type="ECO:0000255" key="1">
    <source>
        <dbReference type="HAMAP-Rule" id="MF_04091"/>
    </source>
</evidence>
<keyword id="KW-1072">Activation of host autophagy by virus</keyword>
<keyword id="KW-0106">Calcium</keyword>
<keyword id="KW-0260">Enterotoxin</keyword>
<keyword id="KW-0325">Glycoprotein</keyword>
<keyword id="KW-1038">Host endoplasmic reticulum</keyword>
<keyword id="KW-1043">Host membrane</keyword>
<keyword id="KW-0945">Host-virus interaction</keyword>
<keyword id="KW-0407">Ion channel</keyword>
<keyword id="KW-0406">Ion transport</keyword>
<keyword id="KW-0472">Membrane</keyword>
<keyword id="KW-0479">Metal-binding</keyword>
<keyword id="KW-0964">Secreted</keyword>
<keyword id="KW-0735">Signal-anchor</keyword>
<keyword id="KW-0800">Toxin</keyword>
<keyword id="KW-0812">Transmembrane</keyword>
<keyword id="KW-1133">Transmembrane helix</keyword>
<keyword id="KW-0813">Transport</keyword>
<keyword id="KW-1182">Viral ion channel</keyword>
<keyword id="KW-0843">Virulence</keyword>
<feature type="chain" id="PRO_0000369475" description="Non-structural glycoprotein 4">
    <location>
        <begin position="1"/>
        <end position="175"/>
    </location>
</feature>
<feature type="topological domain" description="Lumenal" evidence="1">
    <location>
        <begin position="1"/>
        <end position="28"/>
    </location>
</feature>
<feature type="transmembrane region" description="Helical; Signal-anchor for type III membrane protein" evidence="1">
    <location>
        <begin position="29"/>
        <end position="51"/>
    </location>
</feature>
<feature type="topological domain" description="Cytoplasmic" evidence="1">
    <location>
        <begin position="52"/>
        <end position="175"/>
    </location>
</feature>
<feature type="binding site" evidence="1">
    <location>
        <position position="120"/>
    </location>
    <ligand>
        <name>Ca(2+)</name>
        <dbReference type="ChEBI" id="CHEBI:29108"/>
    </ligand>
</feature>
<feature type="binding site" evidence="1">
    <location>
        <position position="123"/>
    </location>
    <ligand>
        <name>Ca(2+)</name>
        <dbReference type="ChEBI" id="CHEBI:29108"/>
    </ligand>
</feature>
<feature type="glycosylation site" description="N-linked (GlcNAc...) asparagine; by host" evidence="1">
    <location>
        <position position="8"/>
    </location>
</feature>
<feature type="glycosylation site" description="N-linked (GlcNAc...) asparagine; by host" evidence="1">
    <location>
        <position position="18"/>
    </location>
</feature>
<name>NSP4_ROTE1</name>
<sequence length="175" mass="20428">MDKLTDLNYTLNVITLINSTLHTILEDPGMAYFPYIASVLTVLFTLHKASIPTMKIALKTSKCSYKVVKYCIVTIFNTLLKLAGYKEQITTKDEIEKQMDRVIKEMRRHLEMIDKLTTREIEQVELLKRIYDKLMIRATDEIDMSKEINQKNVRTLEEWENGKNPYESKEVTAAM</sequence>
<organism>
    <name type="scientific">Rotavirus A (strain RVA/Equine/United States/FI-14/1980/G3P4[12])</name>
    <name type="common">RV-A</name>
    <name type="synonym">Rotavirus A (strain FI14)</name>
    <dbReference type="NCBI Taxonomy" id="36442"/>
    <lineage>
        <taxon>Viruses</taxon>
        <taxon>Riboviria</taxon>
        <taxon>Orthornavirae</taxon>
        <taxon>Duplornaviricota</taxon>
        <taxon>Resentoviricetes</taxon>
        <taxon>Reovirales</taxon>
        <taxon>Sedoreoviridae</taxon>
        <taxon>Rotavirus</taxon>
        <taxon>Equine rotavirus</taxon>
    </lineage>
</organism>